<accession>Q0TMI7</accession>
<comment type="catalytic activity">
    <reaction evidence="1">
        <text>tRNA(Lys) + L-lysine + ATP = L-lysyl-tRNA(Lys) + AMP + diphosphate</text>
        <dbReference type="Rhea" id="RHEA:20792"/>
        <dbReference type="Rhea" id="RHEA-COMP:9696"/>
        <dbReference type="Rhea" id="RHEA-COMP:9697"/>
        <dbReference type="ChEBI" id="CHEBI:30616"/>
        <dbReference type="ChEBI" id="CHEBI:32551"/>
        <dbReference type="ChEBI" id="CHEBI:33019"/>
        <dbReference type="ChEBI" id="CHEBI:78442"/>
        <dbReference type="ChEBI" id="CHEBI:78529"/>
        <dbReference type="ChEBI" id="CHEBI:456215"/>
        <dbReference type="EC" id="6.1.1.6"/>
    </reaction>
</comment>
<comment type="cofactor">
    <cofactor evidence="1">
        <name>Mg(2+)</name>
        <dbReference type="ChEBI" id="CHEBI:18420"/>
    </cofactor>
    <text evidence="1">Binds 3 Mg(2+) ions per subunit.</text>
</comment>
<comment type="subunit">
    <text evidence="1">Homodimer.</text>
</comment>
<comment type="subcellular location">
    <subcellularLocation>
        <location evidence="1">Cytoplasm</location>
    </subcellularLocation>
</comment>
<comment type="similarity">
    <text evidence="1">Belongs to the class-II aminoacyl-tRNA synthetase family.</text>
</comment>
<feature type="chain" id="PRO_1000012871" description="Lysine--tRNA ligase">
    <location>
        <begin position="1"/>
        <end position="501"/>
    </location>
</feature>
<feature type="binding site" evidence="1">
    <location>
        <position position="411"/>
    </location>
    <ligand>
        <name>Mg(2+)</name>
        <dbReference type="ChEBI" id="CHEBI:18420"/>
        <label>1</label>
    </ligand>
</feature>
<feature type="binding site" evidence="1">
    <location>
        <position position="418"/>
    </location>
    <ligand>
        <name>Mg(2+)</name>
        <dbReference type="ChEBI" id="CHEBI:18420"/>
        <label>1</label>
    </ligand>
</feature>
<feature type="binding site" evidence="1">
    <location>
        <position position="418"/>
    </location>
    <ligand>
        <name>Mg(2+)</name>
        <dbReference type="ChEBI" id="CHEBI:18420"/>
        <label>2</label>
    </ligand>
</feature>
<evidence type="ECO:0000255" key="1">
    <source>
        <dbReference type="HAMAP-Rule" id="MF_00252"/>
    </source>
</evidence>
<organism>
    <name type="scientific">Clostridium perfringens (strain ATCC 13124 / DSM 756 / JCM 1290 / NCIMB 6125 / NCTC 8237 / Type A)</name>
    <dbReference type="NCBI Taxonomy" id="195103"/>
    <lineage>
        <taxon>Bacteria</taxon>
        <taxon>Bacillati</taxon>
        <taxon>Bacillota</taxon>
        <taxon>Clostridia</taxon>
        <taxon>Eubacteriales</taxon>
        <taxon>Clostridiaceae</taxon>
        <taxon>Clostridium</taxon>
    </lineage>
</organism>
<proteinExistence type="inferred from homology"/>
<keyword id="KW-0030">Aminoacyl-tRNA synthetase</keyword>
<keyword id="KW-0067">ATP-binding</keyword>
<keyword id="KW-0963">Cytoplasm</keyword>
<keyword id="KW-0436">Ligase</keyword>
<keyword id="KW-0460">Magnesium</keyword>
<keyword id="KW-0479">Metal-binding</keyword>
<keyword id="KW-0547">Nucleotide-binding</keyword>
<keyword id="KW-0648">Protein biosynthesis</keyword>
<gene>
    <name evidence="1" type="primary">lysS</name>
    <name type="ordered locus">CPF_2781</name>
</gene>
<reference key="1">
    <citation type="journal article" date="2006" name="Genome Res.">
        <title>Skewed genomic variability in strains of the toxigenic bacterial pathogen, Clostridium perfringens.</title>
        <authorList>
            <person name="Myers G.S.A."/>
            <person name="Rasko D.A."/>
            <person name="Cheung J.K."/>
            <person name="Ravel J."/>
            <person name="Seshadri R."/>
            <person name="DeBoy R.T."/>
            <person name="Ren Q."/>
            <person name="Varga J."/>
            <person name="Awad M.M."/>
            <person name="Brinkac L.M."/>
            <person name="Daugherty S.C."/>
            <person name="Haft D.H."/>
            <person name="Dodson R.J."/>
            <person name="Madupu R."/>
            <person name="Nelson W.C."/>
            <person name="Rosovitz M.J."/>
            <person name="Sullivan S.A."/>
            <person name="Khouri H."/>
            <person name="Dimitrov G.I."/>
            <person name="Watkins K.L."/>
            <person name="Mulligan S."/>
            <person name="Benton J."/>
            <person name="Radune D."/>
            <person name="Fisher D.J."/>
            <person name="Atkins H.S."/>
            <person name="Hiscox T."/>
            <person name="Jost B.H."/>
            <person name="Billington S.J."/>
            <person name="Songer J.G."/>
            <person name="McClane B.A."/>
            <person name="Titball R.W."/>
            <person name="Rood J.I."/>
            <person name="Melville S.B."/>
            <person name="Paulsen I.T."/>
        </authorList>
    </citation>
    <scope>NUCLEOTIDE SEQUENCE [LARGE SCALE GENOMIC DNA]</scope>
    <source>
        <strain>ATCC 13124 / DSM 756 / JCM 1290 / NCIMB 6125 / NCTC 8237 / S 107 / Type A</strain>
    </source>
</reference>
<protein>
    <recommendedName>
        <fullName evidence="1">Lysine--tRNA ligase</fullName>
        <ecNumber evidence="1">6.1.1.6</ecNumber>
    </recommendedName>
    <alternativeName>
        <fullName evidence="1">Lysyl-tRNA synthetase</fullName>
        <shortName evidence="1">LysRS</shortName>
    </alternativeName>
</protein>
<dbReference type="EC" id="6.1.1.6" evidence="1"/>
<dbReference type="EMBL" id="CP000246">
    <property type="protein sequence ID" value="ABG84074.1"/>
    <property type="molecule type" value="Genomic_DNA"/>
</dbReference>
<dbReference type="RefSeq" id="WP_011591140.1">
    <property type="nucleotide sequence ID" value="NC_008261.1"/>
</dbReference>
<dbReference type="SMR" id="Q0TMI7"/>
<dbReference type="STRING" id="195103.CPF_2781"/>
<dbReference type="PaxDb" id="195103-CPF_2781"/>
<dbReference type="KEGG" id="cpf:CPF_2781"/>
<dbReference type="eggNOG" id="COG1190">
    <property type="taxonomic scope" value="Bacteria"/>
</dbReference>
<dbReference type="HOGENOM" id="CLU_008255_6_0_9"/>
<dbReference type="Proteomes" id="UP000001823">
    <property type="component" value="Chromosome"/>
</dbReference>
<dbReference type="GO" id="GO:0005829">
    <property type="term" value="C:cytosol"/>
    <property type="evidence" value="ECO:0007669"/>
    <property type="project" value="TreeGrafter"/>
</dbReference>
<dbReference type="GO" id="GO:0005524">
    <property type="term" value="F:ATP binding"/>
    <property type="evidence" value="ECO:0007669"/>
    <property type="project" value="UniProtKB-UniRule"/>
</dbReference>
<dbReference type="GO" id="GO:0140096">
    <property type="term" value="F:catalytic activity, acting on a protein"/>
    <property type="evidence" value="ECO:0007669"/>
    <property type="project" value="UniProtKB-ARBA"/>
</dbReference>
<dbReference type="GO" id="GO:0004824">
    <property type="term" value="F:lysine-tRNA ligase activity"/>
    <property type="evidence" value="ECO:0007669"/>
    <property type="project" value="UniProtKB-UniRule"/>
</dbReference>
<dbReference type="GO" id="GO:0000287">
    <property type="term" value="F:magnesium ion binding"/>
    <property type="evidence" value="ECO:0007669"/>
    <property type="project" value="UniProtKB-UniRule"/>
</dbReference>
<dbReference type="GO" id="GO:0016740">
    <property type="term" value="F:transferase activity"/>
    <property type="evidence" value="ECO:0007669"/>
    <property type="project" value="UniProtKB-ARBA"/>
</dbReference>
<dbReference type="GO" id="GO:0000049">
    <property type="term" value="F:tRNA binding"/>
    <property type="evidence" value="ECO:0007669"/>
    <property type="project" value="TreeGrafter"/>
</dbReference>
<dbReference type="GO" id="GO:0006430">
    <property type="term" value="P:lysyl-tRNA aminoacylation"/>
    <property type="evidence" value="ECO:0007669"/>
    <property type="project" value="UniProtKB-UniRule"/>
</dbReference>
<dbReference type="CDD" id="cd00775">
    <property type="entry name" value="LysRS_core"/>
    <property type="match status" value="1"/>
</dbReference>
<dbReference type="CDD" id="cd04322">
    <property type="entry name" value="LysRS_N"/>
    <property type="match status" value="1"/>
</dbReference>
<dbReference type="FunFam" id="2.40.50.140:FF:000024">
    <property type="entry name" value="Lysine--tRNA ligase"/>
    <property type="match status" value="1"/>
</dbReference>
<dbReference type="FunFam" id="3.30.930.10:FF:000001">
    <property type="entry name" value="Lysine--tRNA ligase"/>
    <property type="match status" value="1"/>
</dbReference>
<dbReference type="Gene3D" id="3.30.930.10">
    <property type="entry name" value="Bira Bifunctional Protein, Domain 2"/>
    <property type="match status" value="1"/>
</dbReference>
<dbReference type="Gene3D" id="2.40.50.140">
    <property type="entry name" value="Nucleic acid-binding proteins"/>
    <property type="match status" value="1"/>
</dbReference>
<dbReference type="HAMAP" id="MF_00252">
    <property type="entry name" value="Lys_tRNA_synth_class2"/>
    <property type="match status" value="1"/>
</dbReference>
<dbReference type="InterPro" id="IPR004364">
    <property type="entry name" value="Aa-tRNA-synt_II"/>
</dbReference>
<dbReference type="InterPro" id="IPR006195">
    <property type="entry name" value="aa-tRNA-synth_II"/>
</dbReference>
<dbReference type="InterPro" id="IPR045864">
    <property type="entry name" value="aa-tRNA-synth_II/BPL/LPL"/>
</dbReference>
<dbReference type="InterPro" id="IPR002313">
    <property type="entry name" value="Lys-tRNA-ligase_II"/>
</dbReference>
<dbReference type="InterPro" id="IPR044136">
    <property type="entry name" value="Lys-tRNA-ligase_II_N"/>
</dbReference>
<dbReference type="InterPro" id="IPR018149">
    <property type="entry name" value="Lys-tRNA-synth_II_C"/>
</dbReference>
<dbReference type="InterPro" id="IPR012340">
    <property type="entry name" value="NA-bd_OB-fold"/>
</dbReference>
<dbReference type="InterPro" id="IPR004365">
    <property type="entry name" value="NA-bd_OB_tRNA"/>
</dbReference>
<dbReference type="NCBIfam" id="TIGR00499">
    <property type="entry name" value="lysS_bact"/>
    <property type="match status" value="1"/>
</dbReference>
<dbReference type="NCBIfam" id="NF001756">
    <property type="entry name" value="PRK00484.1"/>
    <property type="match status" value="1"/>
</dbReference>
<dbReference type="PANTHER" id="PTHR42918:SF15">
    <property type="entry name" value="LYSINE--TRNA LIGASE, CHLOROPLASTIC_MITOCHONDRIAL"/>
    <property type="match status" value="1"/>
</dbReference>
<dbReference type="PANTHER" id="PTHR42918">
    <property type="entry name" value="LYSYL-TRNA SYNTHETASE"/>
    <property type="match status" value="1"/>
</dbReference>
<dbReference type="Pfam" id="PF00152">
    <property type="entry name" value="tRNA-synt_2"/>
    <property type="match status" value="1"/>
</dbReference>
<dbReference type="Pfam" id="PF01336">
    <property type="entry name" value="tRNA_anti-codon"/>
    <property type="match status" value="1"/>
</dbReference>
<dbReference type="PRINTS" id="PR00982">
    <property type="entry name" value="TRNASYNTHLYS"/>
</dbReference>
<dbReference type="SUPFAM" id="SSF55681">
    <property type="entry name" value="Class II aaRS and biotin synthetases"/>
    <property type="match status" value="1"/>
</dbReference>
<dbReference type="SUPFAM" id="SSF50249">
    <property type="entry name" value="Nucleic acid-binding proteins"/>
    <property type="match status" value="1"/>
</dbReference>
<dbReference type="PROSITE" id="PS50862">
    <property type="entry name" value="AA_TRNA_LIGASE_II"/>
    <property type="match status" value="1"/>
</dbReference>
<sequence length="501" mass="57522">MSNEEINIHEAEEQLSEQEMLRRQKLAELQEAGKDPFDVYKVERTHSSADVKDNFEELEGKEVKVAGRLMSKRGQGKVVFADLADLPGKIQLFIKIDNVGEEALKEFKTFDLGDWVAATGEVFKTKMGEVSVKVTSFELICKSLKPLPEKWHGLKDPDLRYRQREVDIITNPEVKDTFIKRSQIVKAIREFLDNRGFLEVDTPILSPIAGGAAARPFITHHNALDIDMYLRIATELYLKRLIVAGFEKVYEMGKNFRNEGVSVRHNPEFTAIELYEAYADYNDMMEIMENMIAYVCEKVNGSTKVTYEGTEIDFTPPWRRITMVDAVKEFAGIDFNEIKSDEEAQAIAKEKNLEFPKPLDKVTKGEVLNMLFEEYGEDKLIQPTFLIDYPVEISPLTKKKRGNEMFTERFEGFVYGREVCNAYSELNDPIVQRERFEQQAREREYGDDEAYMLDEEFMSALETGMPPTGGLGIGIDRMIMFLTDSSSIRDVILFPTMKPQK</sequence>
<name>SYK_CLOP1</name>